<evidence type="ECO:0000255" key="1">
    <source>
        <dbReference type="HAMAP-Rule" id="MF_02078"/>
    </source>
</evidence>
<evidence type="ECO:0000305" key="2"/>
<comment type="function">
    <text evidence="1">Involved in peptidoglycan biosynthesis. Transports lipid-linked peptidoglycan precursors from the inner to the outer leaflet of the cytoplasmic membrane.</text>
</comment>
<comment type="pathway">
    <text evidence="1">Cell wall biogenesis; peptidoglycan biosynthesis.</text>
</comment>
<comment type="subcellular location">
    <subcellularLocation>
        <location evidence="1">Cell inner membrane</location>
        <topology evidence="1">Multi-pass membrane protein</topology>
    </subcellularLocation>
</comment>
<comment type="similarity">
    <text evidence="1">Belongs to the MurJ/MviN family.</text>
</comment>
<comment type="sequence caution" evidence="2">
    <conflict type="erroneous initiation">
        <sequence resource="EMBL-CDS" id="CAD12355"/>
    </conflict>
    <text>Truncated N-terminus.</text>
</comment>
<feature type="chain" id="PRO_0000181998" description="Probable lipid II flippase MurJ">
    <location>
        <begin position="1"/>
        <end position="523"/>
    </location>
</feature>
<feature type="transmembrane region" description="Helical" evidence="1">
    <location>
        <begin position="98"/>
        <end position="118"/>
    </location>
</feature>
<feature type="transmembrane region" description="Helical" evidence="1">
    <location>
        <begin position="146"/>
        <end position="166"/>
    </location>
</feature>
<feature type="transmembrane region" description="Helical" evidence="1">
    <location>
        <begin position="170"/>
        <end position="190"/>
    </location>
</feature>
<feature type="transmembrane region" description="Helical" evidence="1">
    <location>
        <begin position="201"/>
        <end position="221"/>
    </location>
</feature>
<feature type="transmembrane region" description="Helical" evidence="1">
    <location>
        <begin position="246"/>
        <end position="266"/>
    </location>
</feature>
<feature type="transmembrane region" description="Helical" evidence="1">
    <location>
        <begin position="284"/>
        <end position="304"/>
    </location>
</feature>
<feature type="transmembrane region" description="Helical" evidence="1">
    <location>
        <begin position="328"/>
        <end position="348"/>
    </location>
</feature>
<feature type="transmembrane region" description="Helical" evidence="1">
    <location>
        <begin position="360"/>
        <end position="380"/>
    </location>
</feature>
<feature type="transmembrane region" description="Helical" evidence="1">
    <location>
        <begin position="395"/>
        <end position="415"/>
    </location>
</feature>
<feature type="transmembrane region" description="Helical" evidence="1">
    <location>
        <begin position="422"/>
        <end position="442"/>
    </location>
</feature>
<feature type="transmembrane region" description="Helical" evidence="1">
    <location>
        <begin position="461"/>
        <end position="481"/>
    </location>
</feature>
<feature type="transmembrane region" description="Helical" evidence="1">
    <location>
        <begin position="489"/>
        <end position="509"/>
    </location>
</feature>
<feature type="sequence conflict" description="In Ref. 1; CAD12355." evidence="2" ref="1">
    <original>D</original>
    <variation>A</variation>
    <location>
        <position position="90"/>
    </location>
</feature>
<feature type="sequence conflict" description="In Ref. 1; CAD12355." evidence="2" ref="1">
    <original>F</original>
    <variation>I</variation>
    <location>
        <position position="106"/>
    </location>
</feature>
<feature type="sequence conflict" description="In Ref. 1; CAD12355." evidence="2" ref="1">
    <original>V</original>
    <variation>L</variation>
    <location>
        <position position="219"/>
    </location>
</feature>
<feature type="sequence conflict" description="In Ref. 1; CAD12355." evidence="2" ref="1">
    <original>NR</original>
    <variation>SQ</variation>
    <location>
        <begin position="309"/>
        <end position="310"/>
    </location>
</feature>
<feature type="sequence conflict" description="In Ref. 1; CAD12355." evidence="2" ref="1">
    <original>V</original>
    <variation>A</variation>
    <location>
        <position position="406"/>
    </location>
</feature>
<feature type="sequence conflict" description="In Ref. 1; CAD12355." evidence="2" ref="1">
    <original>V</original>
    <variation>A</variation>
    <location>
        <position position="429"/>
    </location>
</feature>
<feature type="sequence conflict" description="In Ref. 1; CAD12355." evidence="2" ref="1">
    <original>L</original>
    <variation>F</variation>
    <location>
        <position position="441"/>
    </location>
</feature>
<feature type="sequence conflict" description="In Ref. 1; CAD12355." evidence="2" ref="1">
    <original>K</original>
    <variation>R</variation>
    <location>
        <position position="444"/>
    </location>
</feature>
<dbReference type="EMBL" id="AJ420185">
    <property type="protein sequence ID" value="CAD12355.1"/>
    <property type="status" value="ALT_INIT"/>
    <property type="molecule type" value="Genomic_DNA"/>
</dbReference>
<dbReference type="EMBL" id="BX842649">
    <property type="protein sequence ID" value="CAE79354.1"/>
    <property type="molecule type" value="Genomic_DNA"/>
</dbReference>
<dbReference type="SMR" id="Q8VNZ2"/>
<dbReference type="STRING" id="264462.Bd1468"/>
<dbReference type="KEGG" id="bba:Bd1468"/>
<dbReference type="eggNOG" id="COG0728">
    <property type="taxonomic scope" value="Bacteria"/>
</dbReference>
<dbReference type="HOGENOM" id="CLU_006797_5_3_7"/>
<dbReference type="UniPathway" id="UPA00219"/>
<dbReference type="Proteomes" id="UP000008080">
    <property type="component" value="Chromosome"/>
</dbReference>
<dbReference type="GO" id="GO:0005886">
    <property type="term" value="C:plasma membrane"/>
    <property type="evidence" value="ECO:0007669"/>
    <property type="project" value="UniProtKB-SubCell"/>
</dbReference>
<dbReference type="GO" id="GO:0015648">
    <property type="term" value="F:lipid-linked peptidoglycan transporter activity"/>
    <property type="evidence" value="ECO:0007669"/>
    <property type="project" value="UniProtKB-UniRule"/>
</dbReference>
<dbReference type="GO" id="GO:0071555">
    <property type="term" value="P:cell wall organization"/>
    <property type="evidence" value="ECO:0007669"/>
    <property type="project" value="UniProtKB-KW"/>
</dbReference>
<dbReference type="GO" id="GO:0034204">
    <property type="term" value="P:lipid translocation"/>
    <property type="evidence" value="ECO:0007669"/>
    <property type="project" value="TreeGrafter"/>
</dbReference>
<dbReference type="GO" id="GO:0009252">
    <property type="term" value="P:peptidoglycan biosynthetic process"/>
    <property type="evidence" value="ECO:0007669"/>
    <property type="project" value="UniProtKB-UniRule"/>
</dbReference>
<dbReference type="GO" id="GO:0008360">
    <property type="term" value="P:regulation of cell shape"/>
    <property type="evidence" value="ECO:0007669"/>
    <property type="project" value="UniProtKB-KW"/>
</dbReference>
<dbReference type="CDD" id="cd13123">
    <property type="entry name" value="MATE_MurJ_like"/>
    <property type="match status" value="1"/>
</dbReference>
<dbReference type="HAMAP" id="MF_02078">
    <property type="entry name" value="MurJ_MviN"/>
    <property type="match status" value="1"/>
</dbReference>
<dbReference type="InterPro" id="IPR051050">
    <property type="entry name" value="Lipid_II_flippase_MurJ/MviN"/>
</dbReference>
<dbReference type="InterPro" id="IPR004268">
    <property type="entry name" value="MurJ"/>
</dbReference>
<dbReference type="NCBIfam" id="TIGR01695">
    <property type="entry name" value="murJ_mviN"/>
    <property type="match status" value="1"/>
</dbReference>
<dbReference type="PANTHER" id="PTHR47019">
    <property type="entry name" value="LIPID II FLIPPASE MURJ"/>
    <property type="match status" value="1"/>
</dbReference>
<dbReference type="PANTHER" id="PTHR47019:SF1">
    <property type="entry name" value="LIPID II FLIPPASE MURJ"/>
    <property type="match status" value="1"/>
</dbReference>
<dbReference type="Pfam" id="PF03023">
    <property type="entry name" value="MurJ"/>
    <property type="match status" value="1"/>
</dbReference>
<dbReference type="PIRSF" id="PIRSF002869">
    <property type="entry name" value="MviN"/>
    <property type="match status" value="1"/>
</dbReference>
<dbReference type="PRINTS" id="PR01806">
    <property type="entry name" value="VIRFACTRMVIN"/>
</dbReference>
<sequence length="523" mass="57434">MSHEASGLKEDRKKVLKSAFLMASGTLTSRILGLFRDIALGALFDRAVTDAWTAAFRIPNLFRRLFGEGSLAVSFIPVFMQTQSEDPTGDRARNLANAFYSLLLVFLGVLTLLGIVYVEPLFRLILSSDYALDAAKWELTLRMGRIMFGFVFFVCTYAFYMGILNALGSFGLPALAPALLNVSMLVFTFMPPQWFAVHGDGLAWGVLIGGLLQALLLAVALKQRNYLPRLQKTLWTPEVKAVVRGMLPGLIGMGLLQFSTLVNLYFASSLPEGSISYIYWADRLLELPLSLISVSIGAALLPTLSDFANRGLKEKFQETAEESFLMNLFLAWPAALGLYILAEPIIEVLFLRGKFTVQDVQMTAAILRIYAVSLLLVSCSRVLMPLYYSVKNTKVPMVLALVSLAVHVSLAPVLMRQWGLEGLMISGVVAALINAVLLMGLLKKYSPGIRMSVLLRPALKFVLAGAGMVISLQAYELLMAQTGRGLQMLALFVTILLAVVAYFGLAYVLGCEQISRIRRSSQP</sequence>
<proteinExistence type="inferred from homology"/>
<protein>
    <recommendedName>
        <fullName evidence="1">Probable lipid II flippase MurJ</fullName>
    </recommendedName>
</protein>
<keyword id="KW-0997">Cell inner membrane</keyword>
<keyword id="KW-1003">Cell membrane</keyword>
<keyword id="KW-0133">Cell shape</keyword>
<keyword id="KW-0961">Cell wall biogenesis/degradation</keyword>
<keyword id="KW-0472">Membrane</keyword>
<keyword id="KW-0573">Peptidoglycan synthesis</keyword>
<keyword id="KW-1185">Reference proteome</keyword>
<keyword id="KW-0812">Transmembrane</keyword>
<keyword id="KW-1133">Transmembrane helix</keyword>
<keyword id="KW-0813">Transport</keyword>
<accession>Q8VNZ2</accession>
<reference key="1">
    <citation type="submission" date="2001-11" db="EMBL/GenBank/DDBJ databases">
        <title>A novel assay monitering infection of luminescent E. coli by Bdellovibrio bacteriovorus 109J reveals a role for methyl accepting chemotaxis proteins in predation.</title>
        <authorList>
            <person name="Lambert C."/>
        </authorList>
    </citation>
    <scope>NUCLEOTIDE SEQUENCE [GENOMIC DNA]</scope>
    <source>
        <strain>ATCC 43826 / 109J</strain>
    </source>
</reference>
<reference key="2">
    <citation type="journal article" date="2004" name="Science">
        <title>A predator unmasked: life cycle of Bdellovibrio bacteriovorus from a genomic perspective.</title>
        <authorList>
            <person name="Rendulic S."/>
            <person name="Jagtap P."/>
            <person name="Rosinus A."/>
            <person name="Eppinger M."/>
            <person name="Baar C."/>
            <person name="Lanz C."/>
            <person name="Keller H."/>
            <person name="Lambert C."/>
            <person name="Evans K.J."/>
            <person name="Goesmann A."/>
            <person name="Meyer F."/>
            <person name="Sockett R.E."/>
            <person name="Schuster S.C."/>
        </authorList>
    </citation>
    <scope>NUCLEOTIDE SEQUENCE [LARGE SCALE GENOMIC DNA]</scope>
    <source>
        <strain>ATCC 15356 / DSM 50701 / NCIMB 9529 / HD100</strain>
    </source>
</reference>
<name>MURJ_BDEBA</name>
<gene>
    <name evidence="1" type="primary">murJ</name>
    <name type="synonym">mviN</name>
    <name type="ordered locus">Bd1468</name>
</gene>
<organism>
    <name type="scientific">Bdellovibrio bacteriovorus (strain ATCC 15356 / DSM 50701 / NCIMB 9529 / HD100)</name>
    <dbReference type="NCBI Taxonomy" id="264462"/>
    <lineage>
        <taxon>Bacteria</taxon>
        <taxon>Pseudomonadati</taxon>
        <taxon>Bdellovibrionota</taxon>
        <taxon>Bdellovibrionia</taxon>
        <taxon>Bdellovibrionales</taxon>
        <taxon>Pseudobdellovibrionaceae</taxon>
        <taxon>Bdellovibrio</taxon>
    </lineage>
</organism>